<reference key="1">
    <citation type="submission" date="2008-01" db="EMBL/GenBank/DDBJ databases">
        <title>Complete sequence of Pseudomonas putida GB-1.</title>
        <authorList>
            <consortium name="US DOE Joint Genome Institute"/>
            <person name="Copeland A."/>
            <person name="Lucas S."/>
            <person name="Lapidus A."/>
            <person name="Barry K."/>
            <person name="Glavina del Rio T."/>
            <person name="Dalin E."/>
            <person name="Tice H."/>
            <person name="Pitluck S."/>
            <person name="Bruce D."/>
            <person name="Goodwin L."/>
            <person name="Chertkov O."/>
            <person name="Brettin T."/>
            <person name="Detter J.C."/>
            <person name="Han C."/>
            <person name="Kuske C.R."/>
            <person name="Schmutz J."/>
            <person name="Larimer F."/>
            <person name="Land M."/>
            <person name="Hauser L."/>
            <person name="Kyrpides N."/>
            <person name="Kim E."/>
            <person name="McCarthy J.K."/>
            <person name="Richardson P."/>
        </authorList>
    </citation>
    <scope>NUCLEOTIDE SEQUENCE [LARGE SCALE GENOMIC DNA]</scope>
    <source>
        <strain>GB-1</strain>
    </source>
</reference>
<proteinExistence type="inferred from homology"/>
<protein>
    <recommendedName>
        <fullName evidence="1">Ribosomal RNA small subunit methyltransferase J</fullName>
        <ecNumber evidence="1">2.1.1.242</ecNumber>
    </recommendedName>
    <alternativeName>
        <fullName evidence="1">16S rRNA m2G1516 methyltransferase</fullName>
    </alternativeName>
    <alternativeName>
        <fullName evidence="1">rRNA (guanine-N(2)-)-methyltransferase</fullName>
    </alternativeName>
</protein>
<comment type="function">
    <text evidence="1">Specifically methylates the guanosine in position 1516 of 16S rRNA.</text>
</comment>
<comment type="catalytic activity">
    <reaction evidence="1">
        <text>guanosine(1516) in 16S rRNA + S-adenosyl-L-methionine = N(2)-methylguanosine(1516) in 16S rRNA + S-adenosyl-L-homocysteine + H(+)</text>
        <dbReference type="Rhea" id="RHEA:43220"/>
        <dbReference type="Rhea" id="RHEA-COMP:10412"/>
        <dbReference type="Rhea" id="RHEA-COMP:10413"/>
        <dbReference type="ChEBI" id="CHEBI:15378"/>
        <dbReference type="ChEBI" id="CHEBI:57856"/>
        <dbReference type="ChEBI" id="CHEBI:59789"/>
        <dbReference type="ChEBI" id="CHEBI:74269"/>
        <dbReference type="ChEBI" id="CHEBI:74481"/>
        <dbReference type="EC" id="2.1.1.242"/>
    </reaction>
</comment>
<comment type="subcellular location">
    <subcellularLocation>
        <location evidence="1">Cytoplasm</location>
    </subcellularLocation>
</comment>
<comment type="similarity">
    <text evidence="1">Belongs to the methyltransferase superfamily. RsmJ family.</text>
</comment>
<evidence type="ECO:0000255" key="1">
    <source>
        <dbReference type="HAMAP-Rule" id="MF_01523"/>
    </source>
</evidence>
<evidence type="ECO:0000256" key="2">
    <source>
        <dbReference type="SAM" id="MobiDB-lite"/>
    </source>
</evidence>
<gene>
    <name evidence="1" type="primary">rsmJ</name>
    <name type="ordered locus">PputGB1_1118</name>
</gene>
<keyword id="KW-0963">Cytoplasm</keyword>
<keyword id="KW-0489">Methyltransferase</keyword>
<keyword id="KW-0698">rRNA processing</keyword>
<keyword id="KW-0949">S-adenosyl-L-methionine</keyword>
<keyword id="KW-0808">Transferase</keyword>
<feature type="chain" id="PRO_1000087567" description="Ribosomal RNA small subunit methyltransferase J">
    <location>
        <begin position="1"/>
        <end position="258"/>
    </location>
</feature>
<feature type="region of interest" description="Disordered" evidence="2">
    <location>
        <begin position="232"/>
        <end position="258"/>
    </location>
</feature>
<feature type="compositionally biased region" description="Basic and acidic residues" evidence="2">
    <location>
        <begin position="239"/>
        <end position="252"/>
    </location>
</feature>
<feature type="binding site" evidence="1">
    <location>
        <begin position="123"/>
        <end position="124"/>
    </location>
    <ligand>
        <name>S-adenosyl-L-methionine</name>
        <dbReference type="ChEBI" id="CHEBI:59789"/>
    </ligand>
</feature>
<feature type="binding site" evidence="1">
    <location>
        <position position="177"/>
    </location>
    <ligand>
        <name>S-adenosyl-L-methionine</name>
        <dbReference type="ChEBI" id="CHEBI:59789"/>
    </ligand>
</feature>
<sequence length="258" mass="27741">MEEQGTGIRVEALSAEFAAQAAAWAERLELPLHDEAADFAVQVGADGLQIQQLGPQAPGPVRVDFVEGQAAHRRQFGGGNGQMIAKAVGIAQGVRPQVLDATAGLGKDAFVLASLGCQMTLIERQPLIAALLEDGLARARADEEVGAIVGRMRLLTGNAIERMRAWEGEPPQVIYLDPMFPHRDKSALVKKEMRVFRPLVGDDLDAPALLEAALALASHRVVVKRPRKAPIIDGPKPSHSLEGKSSRYDIYPKKALKA</sequence>
<name>RSMJ_PSEPG</name>
<organism>
    <name type="scientific">Pseudomonas putida (strain GB-1)</name>
    <dbReference type="NCBI Taxonomy" id="76869"/>
    <lineage>
        <taxon>Bacteria</taxon>
        <taxon>Pseudomonadati</taxon>
        <taxon>Pseudomonadota</taxon>
        <taxon>Gammaproteobacteria</taxon>
        <taxon>Pseudomonadales</taxon>
        <taxon>Pseudomonadaceae</taxon>
        <taxon>Pseudomonas</taxon>
    </lineage>
</organism>
<accession>B0KS71</accession>
<dbReference type="EC" id="2.1.1.242" evidence="1"/>
<dbReference type="EMBL" id="CP000926">
    <property type="protein sequence ID" value="ABY97026.1"/>
    <property type="molecule type" value="Genomic_DNA"/>
</dbReference>
<dbReference type="RefSeq" id="WP_012270807.1">
    <property type="nucleotide sequence ID" value="NC_010322.1"/>
</dbReference>
<dbReference type="SMR" id="B0KS71"/>
<dbReference type="KEGG" id="ppg:PputGB1_1118"/>
<dbReference type="eggNOG" id="COG0742">
    <property type="taxonomic scope" value="Bacteria"/>
</dbReference>
<dbReference type="HOGENOM" id="CLU_076324_0_1_6"/>
<dbReference type="Proteomes" id="UP000002157">
    <property type="component" value="Chromosome"/>
</dbReference>
<dbReference type="GO" id="GO:0005737">
    <property type="term" value="C:cytoplasm"/>
    <property type="evidence" value="ECO:0007669"/>
    <property type="project" value="UniProtKB-SubCell"/>
</dbReference>
<dbReference type="GO" id="GO:0008990">
    <property type="term" value="F:rRNA (guanine-N2-)-methyltransferase activity"/>
    <property type="evidence" value="ECO:0007669"/>
    <property type="project" value="UniProtKB-UniRule"/>
</dbReference>
<dbReference type="CDD" id="cd02440">
    <property type="entry name" value="AdoMet_MTases"/>
    <property type="match status" value="1"/>
</dbReference>
<dbReference type="Gene3D" id="3.40.50.150">
    <property type="entry name" value="Vaccinia Virus protein VP39"/>
    <property type="match status" value="1"/>
</dbReference>
<dbReference type="HAMAP" id="MF_01523">
    <property type="entry name" value="16SrRNA_methyltr_J"/>
    <property type="match status" value="1"/>
</dbReference>
<dbReference type="InterPro" id="IPR007536">
    <property type="entry name" value="16SrRNA_methylTrfase_J"/>
</dbReference>
<dbReference type="InterPro" id="IPR029063">
    <property type="entry name" value="SAM-dependent_MTases_sf"/>
</dbReference>
<dbReference type="PANTHER" id="PTHR36112">
    <property type="entry name" value="RIBOSOMAL RNA SMALL SUBUNIT METHYLTRANSFERASE J"/>
    <property type="match status" value="1"/>
</dbReference>
<dbReference type="PANTHER" id="PTHR36112:SF1">
    <property type="entry name" value="RIBOSOMAL RNA SMALL SUBUNIT METHYLTRANSFERASE J"/>
    <property type="match status" value="1"/>
</dbReference>
<dbReference type="Pfam" id="PF04445">
    <property type="entry name" value="SAM_MT"/>
    <property type="match status" value="1"/>
</dbReference>
<dbReference type="SUPFAM" id="SSF53335">
    <property type="entry name" value="S-adenosyl-L-methionine-dependent methyltransferases"/>
    <property type="match status" value="1"/>
</dbReference>